<accession>B3LRC2</accession>
<gene>
    <name type="primary">UTH1</name>
    <name type="ORF">SCRG_04058</name>
</gene>
<proteinExistence type="inferred from homology"/>
<sequence>MKLSALLALSASTAVLAAPAVHHSDNHHHNDKRAVVTVTQYVNADGTVVIPAANTATSAAADGKVESVAAATTTLSSTAAAATTSAAASSSSSSSSSSSSVGSGDFEDGTISCSDFPSGQGAVSLDWLGLGGWASIMDMNGNTATSCQDGYYCSYACSPGYAKTQWPSEQPSDGRSVGGLYCKNGKLYRSNTDTNSLCVEGQGSAQAVNKVSGSIAICGTDYPGSENMVVPTVVGAGSSQPINVIKEDSYYQWQGKKTSAQYYVNNAGVSVEDGCIWGTEGSGVGNWAPVVLGAGYTDGITYLSIIPNPNNKEAPNFNIKIVATDGSTVNGACSYENGVYSGSGSDGCTVSVTSGSANFVFY</sequence>
<evidence type="ECO:0000250" key="1"/>
<evidence type="ECO:0000250" key="2">
    <source>
        <dbReference type="UniProtKB" id="P36135"/>
    </source>
</evidence>
<evidence type="ECO:0000255" key="3"/>
<evidence type="ECO:0000305" key="4"/>
<comment type="function">
    <text evidence="1">Involved in aging, oxidative stress response, and in the regulation of mitochondrial biogenesis. Inactivation of UTH1 increases life span, leads to higher resistance to heat stress and to hydrogen peroxide, and increases sensitivity to the superoxide radical-generating drug paraquat and to copper. Also required for the selective autophagic degradation of mitochondria (mitophagy) in response to nitrogen starvation. Involved in the remodeling of the cell wall during the various phases of yeast culture development and under various environmental conditions and plays a role in septation. Involved in cell sensitivity to boric acid (By similarity).</text>
</comment>
<comment type="subcellular location">
    <subcellularLocation>
        <location evidence="2">Mitochondrion outer membrane</location>
        <topology evidence="2">Peripheral membrane protein</topology>
    </subcellularLocation>
    <subcellularLocation>
        <location evidence="2">Secreted</location>
        <location evidence="2">Cell wall</location>
    </subcellularLocation>
    <text evidence="2">Non-covalently bound to the cell wall.</text>
</comment>
<comment type="similarity">
    <text evidence="4">Belongs to the SUN family.</text>
</comment>
<organism>
    <name type="scientific">Saccharomyces cerevisiae (strain RM11-1a)</name>
    <name type="common">Baker's yeast</name>
    <dbReference type="NCBI Taxonomy" id="285006"/>
    <lineage>
        <taxon>Eukaryota</taxon>
        <taxon>Fungi</taxon>
        <taxon>Dikarya</taxon>
        <taxon>Ascomycota</taxon>
        <taxon>Saccharomycotina</taxon>
        <taxon>Saccharomycetes</taxon>
        <taxon>Saccharomycetales</taxon>
        <taxon>Saccharomycetaceae</taxon>
        <taxon>Saccharomyces</taxon>
    </lineage>
</organism>
<keyword id="KW-0072">Autophagy</keyword>
<keyword id="KW-0119">Carbohydrate metabolism</keyword>
<keyword id="KW-0131">Cell cycle</keyword>
<keyword id="KW-0132">Cell division</keyword>
<keyword id="KW-0134">Cell wall</keyword>
<keyword id="KW-0961">Cell wall biogenesis/degradation</keyword>
<keyword id="KW-0326">Glycosidase</keyword>
<keyword id="KW-0378">Hydrolase</keyword>
<keyword id="KW-0472">Membrane</keyword>
<keyword id="KW-0496">Mitochondrion</keyword>
<keyword id="KW-1000">Mitochondrion outer membrane</keyword>
<keyword id="KW-0624">Polysaccharide degradation</keyword>
<keyword id="KW-0964">Secreted</keyword>
<keyword id="KW-0717">Septation</keyword>
<keyword id="KW-0732">Signal</keyword>
<keyword id="KW-0346">Stress response</keyword>
<protein>
    <recommendedName>
        <fullName>Probable secreted beta-glucosidase UTH1</fullName>
        <ecNumber>3.2.1.-</ecNumber>
    </recommendedName>
    <alternativeName>
        <fullName>Youth protein 1</fullName>
    </alternativeName>
</protein>
<name>UTH1_YEAS1</name>
<feature type="signal peptide" evidence="3">
    <location>
        <begin position="1"/>
        <end position="17"/>
    </location>
</feature>
<feature type="chain" id="PRO_0000377651" description="Probable secreted beta-glucosidase UTH1">
    <location>
        <begin position="18"/>
        <end position="362"/>
    </location>
</feature>
<dbReference type="EC" id="3.2.1.-"/>
<dbReference type="EMBL" id="CH408051">
    <property type="protein sequence ID" value="EDV13125.1"/>
    <property type="molecule type" value="Genomic_DNA"/>
</dbReference>
<dbReference type="HOGENOM" id="CLU_033459_0_0_1"/>
<dbReference type="OrthoDB" id="36584at4893"/>
<dbReference type="Proteomes" id="UP000008335">
    <property type="component" value="Unassembled WGS sequence"/>
</dbReference>
<dbReference type="GO" id="GO:0009986">
    <property type="term" value="C:cell surface"/>
    <property type="evidence" value="ECO:0007669"/>
    <property type="project" value="TreeGrafter"/>
</dbReference>
<dbReference type="GO" id="GO:0005576">
    <property type="term" value="C:extracellular region"/>
    <property type="evidence" value="ECO:0007669"/>
    <property type="project" value="UniProtKB-KW"/>
</dbReference>
<dbReference type="GO" id="GO:0009277">
    <property type="term" value="C:fungal-type cell wall"/>
    <property type="evidence" value="ECO:0007669"/>
    <property type="project" value="TreeGrafter"/>
</dbReference>
<dbReference type="GO" id="GO:0005741">
    <property type="term" value="C:mitochondrial outer membrane"/>
    <property type="evidence" value="ECO:0007669"/>
    <property type="project" value="UniProtKB-SubCell"/>
</dbReference>
<dbReference type="GO" id="GO:0016798">
    <property type="term" value="F:hydrolase activity, acting on glycosyl bonds"/>
    <property type="evidence" value="ECO:0007669"/>
    <property type="project" value="UniProtKB-KW"/>
</dbReference>
<dbReference type="GO" id="GO:0006914">
    <property type="term" value="P:autophagy"/>
    <property type="evidence" value="ECO:0007669"/>
    <property type="project" value="UniProtKB-KW"/>
</dbReference>
<dbReference type="GO" id="GO:0000917">
    <property type="term" value="P:division septum assembly"/>
    <property type="evidence" value="ECO:0007669"/>
    <property type="project" value="UniProtKB-KW"/>
</dbReference>
<dbReference type="GO" id="GO:0031505">
    <property type="term" value="P:fungal-type cell wall organization"/>
    <property type="evidence" value="ECO:0007669"/>
    <property type="project" value="TreeGrafter"/>
</dbReference>
<dbReference type="GO" id="GO:0000272">
    <property type="term" value="P:polysaccharide catabolic process"/>
    <property type="evidence" value="ECO:0007669"/>
    <property type="project" value="UniProtKB-KW"/>
</dbReference>
<dbReference type="InterPro" id="IPR051526">
    <property type="entry name" value="Beta-Glucosidase_SUN"/>
</dbReference>
<dbReference type="InterPro" id="IPR005556">
    <property type="entry name" value="SUN"/>
</dbReference>
<dbReference type="PANTHER" id="PTHR31316">
    <property type="entry name" value="BETA-GLUCOSIDASE-LIKE PROTEIN NCA3, MITOCHONDRIAL-RELATED"/>
    <property type="match status" value="1"/>
</dbReference>
<dbReference type="PANTHER" id="PTHR31316:SF2">
    <property type="entry name" value="BETA-GLUCOSIDASE-LIKE PROTEIN NCA3, MITOCHONDRIAL-RELATED"/>
    <property type="match status" value="1"/>
</dbReference>
<dbReference type="Pfam" id="PF03856">
    <property type="entry name" value="SUN"/>
    <property type="match status" value="1"/>
</dbReference>
<reference key="1">
    <citation type="submission" date="2005-03" db="EMBL/GenBank/DDBJ databases">
        <title>Annotation of the Saccharomyces cerevisiae RM11-1a genome.</title>
        <authorList>
            <consortium name="The Broad Institute Genome Sequencing Platform"/>
            <person name="Birren B.W."/>
            <person name="Lander E.S."/>
            <person name="Galagan J.E."/>
            <person name="Nusbaum C."/>
            <person name="Devon K."/>
            <person name="Cuomo C."/>
            <person name="Jaffe D.B."/>
            <person name="Butler J."/>
            <person name="Alvarez P."/>
            <person name="Gnerre S."/>
            <person name="Grabherr M."/>
            <person name="Kleber M."/>
            <person name="Mauceli E.W."/>
            <person name="Brockman W."/>
            <person name="MacCallum I.A."/>
            <person name="Rounsley S."/>
            <person name="Young S.K."/>
            <person name="LaButti K."/>
            <person name="Pushparaj V."/>
            <person name="DeCaprio D."/>
            <person name="Crawford M."/>
            <person name="Koehrsen M."/>
            <person name="Engels R."/>
            <person name="Montgomery P."/>
            <person name="Pearson M."/>
            <person name="Howarth C."/>
            <person name="Larson L."/>
            <person name="Luoma S."/>
            <person name="White J."/>
            <person name="O'Leary S."/>
            <person name="Kodira C.D."/>
            <person name="Zeng Q."/>
            <person name="Yandava C."/>
            <person name="Alvarado L."/>
            <person name="Pratt S."/>
            <person name="Kruglyak L."/>
        </authorList>
    </citation>
    <scope>NUCLEOTIDE SEQUENCE [LARGE SCALE GENOMIC DNA]</scope>
    <source>
        <strain>RM11-1a</strain>
    </source>
</reference>